<sequence>MTETSLGTSNELLVELTAEIVAAYVSNHVVPVAELPTLIADVHSALNNTTAPAPVVVPVEKPKPAVSVRKSVQDDQITCLECGGTFKSLKRHLMTHHNLSPEEYRDKWDLPADYPMVAPAYAEARSRLAKEMGLGQRRKRRGK</sequence>
<reference key="1">
    <citation type="journal article" date="1995" name="Mol. Plant Microbe Interact.">
        <title>Molecular analysis of the Rhizobium meliloti mucR gene regulating the biosynthesis of the exopolysaccharides succinoglycan and galactoglucan.</title>
        <authorList>
            <person name="Keller M."/>
            <person name="Roxlau A."/>
            <person name="Weng W.M."/>
            <person name="Schmidt M."/>
            <person name="Quandt J."/>
            <person name="Niehaus K."/>
            <person name="Jording D."/>
            <person name="Arnold W."/>
            <person name="Puehler A."/>
        </authorList>
    </citation>
    <scope>NUCLEOTIDE SEQUENCE [GENOMIC DNA]</scope>
    <source>
        <strain>RCR2011 / SU47</strain>
    </source>
</reference>
<reference key="2">
    <citation type="journal article" date="2000" name="Mol. Plant Microbe Interact.">
        <title>MucR is necessary for galactoglucan production in Sinorhizobium meliloti EFB1.</title>
        <authorList>
            <person name="Martin M."/>
            <person name="Lloret J."/>
            <person name="Sanchez-Contreras M."/>
            <person name="Bonilla I."/>
            <person name="Rivilla R."/>
        </authorList>
    </citation>
    <scope>NUCLEOTIDE SEQUENCE [GENOMIC DNA]</scope>
    <source>
        <strain>EFB1</strain>
    </source>
</reference>
<reference key="3">
    <citation type="journal article" date="2001" name="Proc. Natl. Acad. Sci. U.S.A.">
        <title>Analysis of the chromosome sequence of the legume symbiont Sinorhizobium meliloti strain 1021.</title>
        <authorList>
            <person name="Capela D."/>
            <person name="Barloy-Hubler F."/>
            <person name="Gouzy J."/>
            <person name="Bothe G."/>
            <person name="Ampe F."/>
            <person name="Batut J."/>
            <person name="Boistard P."/>
            <person name="Becker A."/>
            <person name="Boutry M."/>
            <person name="Cadieu E."/>
            <person name="Dreano S."/>
            <person name="Gloux S."/>
            <person name="Godrie T."/>
            <person name="Goffeau A."/>
            <person name="Kahn D."/>
            <person name="Kiss E."/>
            <person name="Lelaure V."/>
            <person name="Masuy D."/>
            <person name="Pohl T."/>
            <person name="Portetelle D."/>
            <person name="Puehler A."/>
            <person name="Purnelle B."/>
            <person name="Ramsperger U."/>
            <person name="Renard C."/>
            <person name="Thebault P."/>
            <person name="Vandenbol M."/>
            <person name="Weidner S."/>
            <person name="Galibert F."/>
        </authorList>
    </citation>
    <scope>NUCLEOTIDE SEQUENCE [LARGE SCALE GENOMIC DNA]</scope>
    <source>
        <strain>1021</strain>
    </source>
</reference>
<reference key="4">
    <citation type="journal article" date="2001" name="Science">
        <title>The composite genome of the legume symbiont Sinorhizobium meliloti.</title>
        <authorList>
            <person name="Galibert F."/>
            <person name="Finan T.M."/>
            <person name="Long S.R."/>
            <person name="Puehler A."/>
            <person name="Abola P."/>
            <person name="Ampe F."/>
            <person name="Barloy-Hubler F."/>
            <person name="Barnett M.J."/>
            <person name="Becker A."/>
            <person name="Boistard P."/>
            <person name="Bothe G."/>
            <person name="Boutry M."/>
            <person name="Bowser L."/>
            <person name="Buhrmester J."/>
            <person name="Cadieu E."/>
            <person name="Capela D."/>
            <person name="Chain P."/>
            <person name="Cowie A."/>
            <person name="Davis R.W."/>
            <person name="Dreano S."/>
            <person name="Federspiel N.A."/>
            <person name="Fisher R.F."/>
            <person name="Gloux S."/>
            <person name="Godrie T."/>
            <person name="Goffeau A."/>
            <person name="Golding B."/>
            <person name="Gouzy J."/>
            <person name="Gurjal M."/>
            <person name="Hernandez-Lucas I."/>
            <person name="Hong A."/>
            <person name="Huizar L."/>
            <person name="Hyman R.W."/>
            <person name="Jones T."/>
            <person name="Kahn D."/>
            <person name="Kahn M.L."/>
            <person name="Kalman S."/>
            <person name="Keating D.H."/>
            <person name="Kiss E."/>
            <person name="Komp C."/>
            <person name="Lelaure V."/>
            <person name="Masuy D."/>
            <person name="Palm C."/>
            <person name="Peck M.C."/>
            <person name="Pohl T.M."/>
            <person name="Portetelle D."/>
            <person name="Purnelle B."/>
            <person name="Ramsperger U."/>
            <person name="Surzycki R."/>
            <person name="Thebault P."/>
            <person name="Vandenbol M."/>
            <person name="Vorhoelter F.J."/>
            <person name="Weidner S."/>
            <person name="Wells D.H."/>
            <person name="Wong K."/>
            <person name="Yeh K.-C."/>
            <person name="Batut J."/>
        </authorList>
    </citation>
    <scope>NUCLEOTIDE SEQUENCE [LARGE SCALE GENOMIC DNA]</scope>
    <source>
        <strain>1021</strain>
    </source>
</reference>
<feature type="chain" id="PRO_0000168170" description="Transcriptional regulatory protein MucR">
    <location>
        <begin position="1"/>
        <end position="143"/>
    </location>
</feature>
<feature type="zinc finger region" description="C2H3-type">
    <location>
        <begin position="79"/>
        <end position="97"/>
    </location>
</feature>
<feature type="sequence variant" description="In strain: EFB1.">
    <original>E</original>
    <variation>D</variation>
    <location>
        <position position="103"/>
    </location>
</feature>
<comment type="function">
    <text>Regulator of exopolysaccharide synthesis. Represses the activation of EPS II (exp) genes for galactoglucan and activates the EPS I (exo) genes for succinoglycan. Also negatively regulates its own transcription.</text>
</comment>
<comment type="similarity">
    <text evidence="1">Belongs to the ros/MucR family.</text>
</comment>
<keyword id="KW-0010">Activator</keyword>
<keyword id="KW-0238">DNA-binding</keyword>
<keyword id="KW-0479">Metal-binding</keyword>
<keyword id="KW-1185">Reference proteome</keyword>
<keyword id="KW-0678">Repressor</keyword>
<keyword id="KW-0804">Transcription</keyword>
<keyword id="KW-0805">Transcription regulation</keyword>
<keyword id="KW-0862">Zinc</keyword>
<keyword id="KW-0863">Zinc-finger</keyword>
<evidence type="ECO:0000305" key="1"/>
<accession>P55323</accession>
<name>MUCR_RHIME</name>
<dbReference type="EMBL" id="L37353">
    <property type="protein sequence ID" value="AAA74239.1"/>
    <property type="molecule type" value="Genomic_DNA"/>
</dbReference>
<dbReference type="EMBL" id="AJ237844">
    <property type="protein sequence ID" value="CAB61530.1"/>
    <property type="molecule type" value="Genomic_DNA"/>
</dbReference>
<dbReference type="EMBL" id="AL591688">
    <property type="protein sequence ID" value="CAC45571.1"/>
    <property type="molecule type" value="Genomic_DNA"/>
</dbReference>
<dbReference type="RefSeq" id="NP_385105.1">
    <property type="nucleotide sequence ID" value="NC_003047.1"/>
</dbReference>
<dbReference type="RefSeq" id="WP_003527383.1">
    <property type="nucleotide sequence ID" value="NC_003047.1"/>
</dbReference>
<dbReference type="SMR" id="P55323"/>
<dbReference type="EnsemblBacteria" id="CAC45571">
    <property type="protein sequence ID" value="CAC45571"/>
    <property type="gene ID" value="SMc00058"/>
</dbReference>
<dbReference type="GeneID" id="89575321"/>
<dbReference type="KEGG" id="sme:SMc00058"/>
<dbReference type="PATRIC" id="fig|266834.11.peg.2400"/>
<dbReference type="eggNOG" id="COG4957">
    <property type="taxonomic scope" value="Bacteria"/>
</dbReference>
<dbReference type="HOGENOM" id="CLU_106247_2_1_5"/>
<dbReference type="OrthoDB" id="9809693at2"/>
<dbReference type="Proteomes" id="UP000001976">
    <property type="component" value="Chromosome"/>
</dbReference>
<dbReference type="GO" id="GO:0003677">
    <property type="term" value="F:DNA binding"/>
    <property type="evidence" value="ECO:0007669"/>
    <property type="project" value="UniProtKB-KW"/>
</dbReference>
<dbReference type="GO" id="GO:0008270">
    <property type="term" value="F:zinc ion binding"/>
    <property type="evidence" value="ECO:0007669"/>
    <property type="project" value="UniProtKB-KW"/>
</dbReference>
<dbReference type="GO" id="GO:0006355">
    <property type="term" value="P:regulation of DNA-templated transcription"/>
    <property type="evidence" value="ECO:0007669"/>
    <property type="project" value="InterPro"/>
</dbReference>
<dbReference type="Gene3D" id="1.10.10.1550">
    <property type="entry name" value="ROS/MUCR transcriptional regulator protein"/>
    <property type="match status" value="1"/>
</dbReference>
<dbReference type="InterPro" id="IPR041920">
    <property type="entry name" value="ROS/MUCR_sf"/>
</dbReference>
<dbReference type="InterPro" id="IPR008807">
    <property type="entry name" value="ROS_MUCR"/>
</dbReference>
<dbReference type="Pfam" id="PF05443">
    <property type="entry name" value="ROS_MUCR"/>
    <property type="match status" value="1"/>
</dbReference>
<gene>
    <name type="primary">mucR</name>
    <name type="ordered locus">R00999</name>
    <name type="ORF">SMc00058</name>
</gene>
<organism>
    <name type="scientific">Rhizobium meliloti (strain 1021)</name>
    <name type="common">Ensifer meliloti</name>
    <name type="synonym">Sinorhizobium meliloti</name>
    <dbReference type="NCBI Taxonomy" id="266834"/>
    <lineage>
        <taxon>Bacteria</taxon>
        <taxon>Pseudomonadati</taxon>
        <taxon>Pseudomonadota</taxon>
        <taxon>Alphaproteobacteria</taxon>
        <taxon>Hyphomicrobiales</taxon>
        <taxon>Rhizobiaceae</taxon>
        <taxon>Sinorhizobium/Ensifer group</taxon>
        <taxon>Sinorhizobium</taxon>
    </lineage>
</organism>
<proteinExistence type="inferred from homology"/>
<protein>
    <recommendedName>
        <fullName>Transcriptional regulatory protein MucR</fullName>
    </recommendedName>
</protein>